<proteinExistence type="inferred from homology"/>
<name>Y342_CHLMU</name>
<organism>
    <name type="scientific">Chlamydia muridarum (strain MoPn / Nigg)</name>
    <dbReference type="NCBI Taxonomy" id="243161"/>
    <lineage>
        <taxon>Bacteria</taxon>
        <taxon>Pseudomonadati</taxon>
        <taxon>Chlamydiota</taxon>
        <taxon>Chlamydiia</taxon>
        <taxon>Chlamydiales</taxon>
        <taxon>Chlamydiaceae</taxon>
        <taxon>Chlamydia/Chlamydophila group</taxon>
        <taxon>Chlamydia</taxon>
    </lineage>
</organism>
<accession>Q9PKW9</accession>
<feature type="chain" id="PRO_0000171166" description="Probable metal transport system membrane protein TC_0342">
    <location>
        <begin position="1"/>
        <end position="316"/>
    </location>
</feature>
<feature type="transmembrane region" description="Helical" evidence="1">
    <location>
        <begin position="1"/>
        <end position="21"/>
    </location>
</feature>
<feature type="transmembrane region" description="Helical" evidence="1">
    <location>
        <begin position="39"/>
        <end position="59"/>
    </location>
</feature>
<feature type="transmembrane region" description="Helical" evidence="1">
    <location>
        <begin position="64"/>
        <end position="84"/>
    </location>
</feature>
<feature type="transmembrane region" description="Helical" evidence="1">
    <location>
        <begin position="94"/>
        <end position="114"/>
    </location>
</feature>
<feature type="transmembrane region" description="Helical" evidence="1">
    <location>
        <begin position="124"/>
        <end position="144"/>
    </location>
</feature>
<feature type="transmembrane region" description="Helical" evidence="1">
    <location>
        <begin position="171"/>
        <end position="191"/>
    </location>
</feature>
<feature type="transmembrane region" description="Helical" evidence="1">
    <location>
        <begin position="196"/>
        <end position="216"/>
    </location>
</feature>
<feature type="transmembrane region" description="Helical" evidence="1">
    <location>
        <begin position="226"/>
        <end position="246"/>
    </location>
</feature>
<feature type="transmembrane region" description="Helical" evidence="1">
    <location>
        <begin position="252"/>
        <end position="272"/>
    </location>
</feature>
<feature type="transmembrane region" description="Helical" evidence="1">
    <location>
        <begin position="286"/>
        <end position="306"/>
    </location>
</feature>
<dbReference type="EMBL" id="AE002160">
    <property type="protein sequence ID" value="AAF39203.1"/>
    <property type="molecule type" value="Genomic_DNA"/>
</dbReference>
<dbReference type="PIR" id="F81712">
    <property type="entry name" value="F81712"/>
</dbReference>
<dbReference type="RefSeq" id="WP_010904316.1">
    <property type="nucleotide sequence ID" value="NC_002620.2"/>
</dbReference>
<dbReference type="GeneID" id="1246385"/>
<dbReference type="KEGG" id="cmu:TC_0342"/>
<dbReference type="PATRIC" id="fig|243161.6.peg.370"/>
<dbReference type="eggNOG" id="COG1108">
    <property type="taxonomic scope" value="Bacteria"/>
</dbReference>
<dbReference type="HOGENOM" id="CLU_028808_2_0_0"/>
<dbReference type="Proteomes" id="UP000000800">
    <property type="component" value="Chromosome"/>
</dbReference>
<dbReference type="GO" id="GO:0043190">
    <property type="term" value="C:ATP-binding cassette (ABC) transporter complex"/>
    <property type="evidence" value="ECO:0007669"/>
    <property type="project" value="InterPro"/>
</dbReference>
<dbReference type="GO" id="GO:0010043">
    <property type="term" value="P:response to zinc ion"/>
    <property type="evidence" value="ECO:0007669"/>
    <property type="project" value="TreeGrafter"/>
</dbReference>
<dbReference type="GO" id="GO:0055085">
    <property type="term" value="P:transmembrane transport"/>
    <property type="evidence" value="ECO:0007669"/>
    <property type="project" value="InterPro"/>
</dbReference>
<dbReference type="CDD" id="cd06550">
    <property type="entry name" value="TM_ABC_iron-siderophores_like"/>
    <property type="match status" value="1"/>
</dbReference>
<dbReference type="Gene3D" id="1.10.3470.10">
    <property type="entry name" value="ABC transporter involved in vitamin B12 uptake, BtuC"/>
    <property type="match status" value="1"/>
</dbReference>
<dbReference type="InterPro" id="IPR037294">
    <property type="entry name" value="ABC_BtuC-like"/>
</dbReference>
<dbReference type="InterPro" id="IPR001626">
    <property type="entry name" value="ABC_TroCD"/>
</dbReference>
<dbReference type="PANTHER" id="PTHR30477">
    <property type="entry name" value="ABC-TRANSPORTER METAL-BINDING PROTEIN"/>
    <property type="match status" value="1"/>
</dbReference>
<dbReference type="PANTHER" id="PTHR30477:SF8">
    <property type="entry name" value="METAL TRANSPORT SYSTEM MEMBRANE PROTEIN CT_070-RELATED"/>
    <property type="match status" value="1"/>
</dbReference>
<dbReference type="Pfam" id="PF00950">
    <property type="entry name" value="ABC-3"/>
    <property type="match status" value="1"/>
</dbReference>
<dbReference type="SUPFAM" id="SSF81345">
    <property type="entry name" value="ABC transporter involved in vitamin B12 uptake, BtuC"/>
    <property type="match status" value="1"/>
</dbReference>
<evidence type="ECO:0000255" key="1"/>
<evidence type="ECO:0000305" key="2"/>
<gene>
    <name type="ordered locus">TC_0342</name>
</gene>
<keyword id="KW-0997">Cell inner membrane</keyword>
<keyword id="KW-1003">Cell membrane</keyword>
<keyword id="KW-0472">Membrane</keyword>
<keyword id="KW-0812">Transmembrane</keyword>
<keyword id="KW-1133">Transmembrane helix</keyword>
<keyword id="KW-0813">Transport</keyword>
<sequence length="316" mass="34474">MFASISPYYGVSFFEFFIVFFSRLFSGKLFYDHLYIDDIQVIVFFAIAVSCSIIGTFLVLKKMAMYANVVSHTILFGLVCACLFTHQLTHLSMQNLTIAAISTTLLTGASIHFIRNVFKVAEEASTALVFSLLFSASLLLLVFLTRNAHVGTELVIGNADALAKTDIFPVFLVLLXNLGVSYCFFSSFICVSFDTVFAFSLGIRVKLIDYLMMFLLSASIVGAFKAVGVLMSLAFLLVPGLIAKLIASSVQEMMGYSMIFGVLSALIAPALSRSILSVHGIGLSTSGLAVCLLLVFYIGTLATVFVRRHILLQSKN</sequence>
<reference key="1">
    <citation type="journal article" date="2000" name="Nucleic Acids Res.">
        <title>Genome sequences of Chlamydia trachomatis MoPn and Chlamydia pneumoniae AR39.</title>
        <authorList>
            <person name="Read T.D."/>
            <person name="Brunham R.C."/>
            <person name="Shen C."/>
            <person name="Gill S.R."/>
            <person name="Heidelberg J.F."/>
            <person name="White O."/>
            <person name="Hickey E.K."/>
            <person name="Peterson J.D."/>
            <person name="Utterback T.R."/>
            <person name="Berry K.J."/>
            <person name="Bass S."/>
            <person name="Linher K.D."/>
            <person name="Weidman J.F."/>
            <person name="Khouri H.M."/>
            <person name="Craven B."/>
            <person name="Bowman C."/>
            <person name="Dodson R.J."/>
            <person name="Gwinn M.L."/>
            <person name="Nelson W.C."/>
            <person name="DeBoy R.T."/>
            <person name="Kolonay J.F."/>
            <person name="McClarty G."/>
            <person name="Salzberg S.L."/>
            <person name="Eisen J.A."/>
            <person name="Fraser C.M."/>
        </authorList>
    </citation>
    <scope>NUCLEOTIDE SEQUENCE [LARGE SCALE GENOMIC DNA]</scope>
    <source>
        <strain>MoPn / Nigg</strain>
    </source>
</reference>
<protein>
    <recommendedName>
        <fullName>Probable metal transport system membrane protein TC_0342</fullName>
    </recommendedName>
</protein>
<comment type="function">
    <text>Part of an ATP-driven transport system TC_0338/TC_0339/TC_0341/TC_0342 for a metal.</text>
</comment>
<comment type="subcellular location">
    <subcellularLocation>
        <location evidence="2">Cell inner membrane</location>
        <topology evidence="2">Multi-pass membrane protein</topology>
    </subcellularLocation>
</comment>
<comment type="similarity">
    <text evidence="2">Belongs to the ABC-3 integral membrane protein family.</text>
</comment>